<keyword id="KW-0025">Alternative splicing</keyword>
<keyword id="KW-0050">Antiport</keyword>
<keyword id="KW-1003">Cell membrane</keyword>
<keyword id="KW-0968">Cytoplasmic vesicle</keyword>
<keyword id="KW-0221">Differentiation</keyword>
<keyword id="KW-0967">Endosome</keyword>
<keyword id="KW-0333">Golgi apparatus</keyword>
<keyword id="KW-0406">Ion transport</keyword>
<keyword id="KW-0472">Membrane</keyword>
<keyword id="KW-0597">Phosphoprotein</keyword>
<keyword id="KW-1267">Proteomics identification</keyword>
<keyword id="KW-1185">Reference proteome</keyword>
<keyword id="KW-0915">Sodium</keyword>
<keyword id="KW-0739">Sodium transport</keyword>
<keyword id="KW-0744">Spermatogenesis</keyword>
<keyword id="KW-0812">Transmembrane</keyword>
<keyword id="KW-1133">Transmembrane helix</keyword>
<keyword id="KW-0813">Transport</keyword>
<reference key="1">
    <citation type="journal article" date="1999" name="DNA Res.">
        <title>Prediction of the coding sequences of unidentified human genes. XIII. The complete sequences of 100 new cDNA clones from brain which code for large proteins in vitro.</title>
        <authorList>
            <person name="Nagase T."/>
            <person name="Ishikawa K."/>
            <person name="Suyama M."/>
            <person name="Kikuno R."/>
            <person name="Hirosawa M."/>
            <person name="Miyajima N."/>
            <person name="Tanaka A."/>
            <person name="Kotani H."/>
            <person name="Nomura N."/>
            <person name="Ohara O."/>
        </authorList>
    </citation>
    <scope>NUCLEOTIDE SEQUENCE [LARGE SCALE MRNA] (ISOFORM 1)</scope>
    <source>
        <tissue>Brain</tissue>
    </source>
</reference>
<reference key="2">
    <citation type="journal article" date="2002" name="DNA Res.">
        <title>Construction of expression-ready cDNA clones for KIAA genes: manual curation of 330 KIAA cDNA clones.</title>
        <authorList>
            <person name="Nakajima D."/>
            <person name="Okazaki N."/>
            <person name="Yamakawa H."/>
            <person name="Kikuno R."/>
            <person name="Ohara O."/>
            <person name="Nagase T."/>
        </authorList>
    </citation>
    <scope>SEQUENCE REVISION</scope>
</reference>
<reference key="3">
    <citation type="journal article" date="2004" name="Nat. Genet.">
        <title>Complete sequencing and characterization of 21,243 full-length human cDNAs.</title>
        <authorList>
            <person name="Ota T."/>
            <person name="Suzuki Y."/>
            <person name="Nishikawa T."/>
            <person name="Otsuki T."/>
            <person name="Sugiyama T."/>
            <person name="Irie R."/>
            <person name="Wakamatsu A."/>
            <person name="Hayashi K."/>
            <person name="Sato H."/>
            <person name="Nagai K."/>
            <person name="Kimura K."/>
            <person name="Makita H."/>
            <person name="Sekine M."/>
            <person name="Obayashi M."/>
            <person name="Nishi T."/>
            <person name="Shibahara T."/>
            <person name="Tanaka T."/>
            <person name="Ishii S."/>
            <person name="Yamamoto J."/>
            <person name="Saito K."/>
            <person name="Kawai Y."/>
            <person name="Isono Y."/>
            <person name="Nakamura Y."/>
            <person name="Nagahari K."/>
            <person name="Murakami K."/>
            <person name="Yasuda T."/>
            <person name="Iwayanagi T."/>
            <person name="Wagatsuma M."/>
            <person name="Shiratori A."/>
            <person name="Sudo H."/>
            <person name="Hosoiri T."/>
            <person name="Kaku Y."/>
            <person name="Kodaira H."/>
            <person name="Kondo H."/>
            <person name="Sugawara M."/>
            <person name="Takahashi M."/>
            <person name="Kanda K."/>
            <person name="Yokoi T."/>
            <person name="Furuya T."/>
            <person name="Kikkawa E."/>
            <person name="Omura Y."/>
            <person name="Abe K."/>
            <person name="Kamihara K."/>
            <person name="Katsuta N."/>
            <person name="Sato K."/>
            <person name="Tanikawa M."/>
            <person name="Yamazaki M."/>
            <person name="Ninomiya K."/>
            <person name="Ishibashi T."/>
            <person name="Yamashita H."/>
            <person name="Murakawa K."/>
            <person name="Fujimori K."/>
            <person name="Tanai H."/>
            <person name="Kimata M."/>
            <person name="Watanabe M."/>
            <person name="Hiraoka S."/>
            <person name="Chiba Y."/>
            <person name="Ishida S."/>
            <person name="Ono Y."/>
            <person name="Takiguchi S."/>
            <person name="Watanabe S."/>
            <person name="Yosida M."/>
            <person name="Hotuta T."/>
            <person name="Kusano J."/>
            <person name="Kanehori K."/>
            <person name="Takahashi-Fujii A."/>
            <person name="Hara H."/>
            <person name="Tanase T.-O."/>
            <person name="Nomura Y."/>
            <person name="Togiya S."/>
            <person name="Komai F."/>
            <person name="Hara R."/>
            <person name="Takeuchi K."/>
            <person name="Arita M."/>
            <person name="Imose N."/>
            <person name="Musashino K."/>
            <person name="Yuuki H."/>
            <person name="Oshima A."/>
            <person name="Sasaki N."/>
            <person name="Aotsuka S."/>
            <person name="Yoshikawa Y."/>
            <person name="Matsunawa H."/>
            <person name="Ichihara T."/>
            <person name="Shiohata N."/>
            <person name="Sano S."/>
            <person name="Moriya S."/>
            <person name="Momiyama H."/>
            <person name="Satoh N."/>
            <person name="Takami S."/>
            <person name="Terashima Y."/>
            <person name="Suzuki O."/>
            <person name="Nakagawa S."/>
            <person name="Senoh A."/>
            <person name="Mizoguchi H."/>
            <person name="Goto Y."/>
            <person name="Shimizu F."/>
            <person name="Wakebe H."/>
            <person name="Hishigaki H."/>
            <person name="Watanabe T."/>
            <person name="Sugiyama A."/>
            <person name="Takemoto M."/>
            <person name="Kawakami B."/>
            <person name="Yamazaki M."/>
            <person name="Watanabe K."/>
            <person name="Kumagai A."/>
            <person name="Itakura S."/>
            <person name="Fukuzumi Y."/>
            <person name="Fujimori Y."/>
            <person name="Komiyama M."/>
            <person name="Tashiro H."/>
            <person name="Tanigami A."/>
            <person name="Fujiwara T."/>
            <person name="Ono T."/>
            <person name="Yamada K."/>
            <person name="Fujii Y."/>
            <person name="Ozaki K."/>
            <person name="Hirao M."/>
            <person name="Ohmori Y."/>
            <person name="Kawabata A."/>
            <person name="Hikiji T."/>
            <person name="Kobatake N."/>
            <person name="Inagaki H."/>
            <person name="Ikema Y."/>
            <person name="Okamoto S."/>
            <person name="Okitani R."/>
            <person name="Kawakami T."/>
            <person name="Noguchi S."/>
            <person name="Itoh T."/>
            <person name="Shigeta K."/>
            <person name="Senba T."/>
            <person name="Matsumura K."/>
            <person name="Nakajima Y."/>
            <person name="Mizuno T."/>
            <person name="Morinaga M."/>
            <person name="Sasaki M."/>
            <person name="Togashi T."/>
            <person name="Oyama M."/>
            <person name="Hata H."/>
            <person name="Watanabe M."/>
            <person name="Komatsu T."/>
            <person name="Mizushima-Sugano J."/>
            <person name="Satoh T."/>
            <person name="Shirai Y."/>
            <person name="Takahashi Y."/>
            <person name="Nakagawa K."/>
            <person name="Okumura K."/>
            <person name="Nagase T."/>
            <person name="Nomura N."/>
            <person name="Kikuchi H."/>
            <person name="Masuho Y."/>
            <person name="Yamashita R."/>
            <person name="Nakai K."/>
            <person name="Yada T."/>
            <person name="Nakamura Y."/>
            <person name="Ohara O."/>
            <person name="Isogai T."/>
            <person name="Sugano S."/>
        </authorList>
    </citation>
    <scope>NUCLEOTIDE SEQUENCE [LARGE SCALE MRNA] (ISOFORM 2)</scope>
    <scope>NUCLEOTIDE SEQUENCE [LARGE SCALE MRNA] OF 1-155 (ISOFORM 1)</scope>
    <source>
        <tissue>Gastric mucosa</tissue>
        <tissue>Placenta</tissue>
    </source>
</reference>
<reference key="4">
    <citation type="journal article" date="2007" name="BMC Genomics">
        <title>The full-ORF clone resource of the German cDNA consortium.</title>
        <authorList>
            <person name="Bechtel S."/>
            <person name="Rosenfelder H."/>
            <person name="Duda A."/>
            <person name="Schmidt C.P."/>
            <person name="Ernst U."/>
            <person name="Wellenreuther R."/>
            <person name="Mehrle A."/>
            <person name="Schuster C."/>
            <person name="Bahr A."/>
            <person name="Bloecker H."/>
            <person name="Heubner D."/>
            <person name="Hoerlein A."/>
            <person name="Michel G."/>
            <person name="Wedler H."/>
            <person name="Koehrer K."/>
            <person name="Ottenwaelder B."/>
            <person name="Poustka A."/>
            <person name="Wiemann S."/>
            <person name="Schupp I."/>
        </authorList>
    </citation>
    <scope>NUCLEOTIDE SEQUENCE [LARGE SCALE MRNA] (ISOFORM 1)</scope>
    <source>
        <tissue>Small intestine</tissue>
    </source>
</reference>
<reference key="5">
    <citation type="journal article" date="2001" name="Nature">
        <title>The DNA sequence and comparative analysis of human chromosome 20.</title>
        <authorList>
            <person name="Deloukas P."/>
            <person name="Matthews L.H."/>
            <person name="Ashurst J.L."/>
            <person name="Burton J."/>
            <person name="Gilbert J.G.R."/>
            <person name="Jones M."/>
            <person name="Stavrides G."/>
            <person name="Almeida J.P."/>
            <person name="Babbage A.K."/>
            <person name="Bagguley C.L."/>
            <person name="Bailey J."/>
            <person name="Barlow K.F."/>
            <person name="Bates K.N."/>
            <person name="Beard L.M."/>
            <person name="Beare D.M."/>
            <person name="Beasley O.P."/>
            <person name="Bird C.P."/>
            <person name="Blakey S.E."/>
            <person name="Bridgeman A.M."/>
            <person name="Brown A.J."/>
            <person name="Buck D."/>
            <person name="Burrill W.D."/>
            <person name="Butler A.P."/>
            <person name="Carder C."/>
            <person name="Carter N.P."/>
            <person name="Chapman J.C."/>
            <person name="Clamp M."/>
            <person name="Clark G."/>
            <person name="Clark L.N."/>
            <person name="Clark S.Y."/>
            <person name="Clee C.M."/>
            <person name="Clegg S."/>
            <person name="Cobley V.E."/>
            <person name="Collier R.E."/>
            <person name="Connor R.E."/>
            <person name="Corby N.R."/>
            <person name="Coulson A."/>
            <person name="Coville G.J."/>
            <person name="Deadman R."/>
            <person name="Dhami P.D."/>
            <person name="Dunn M."/>
            <person name="Ellington A.G."/>
            <person name="Frankland J.A."/>
            <person name="Fraser A."/>
            <person name="French L."/>
            <person name="Garner P."/>
            <person name="Grafham D.V."/>
            <person name="Griffiths C."/>
            <person name="Griffiths M.N.D."/>
            <person name="Gwilliam R."/>
            <person name="Hall R.E."/>
            <person name="Hammond S."/>
            <person name="Harley J.L."/>
            <person name="Heath P.D."/>
            <person name="Ho S."/>
            <person name="Holden J.L."/>
            <person name="Howden P.J."/>
            <person name="Huckle E."/>
            <person name="Hunt A.R."/>
            <person name="Hunt S.E."/>
            <person name="Jekosch K."/>
            <person name="Johnson C.M."/>
            <person name="Johnson D."/>
            <person name="Kay M.P."/>
            <person name="Kimberley A.M."/>
            <person name="King A."/>
            <person name="Knights A."/>
            <person name="Laird G.K."/>
            <person name="Lawlor S."/>
            <person name="Lehvaeslaiho M.H."/>
            <person name="Leversha M.A."/>
            <person name="Lloyd C."/>
            <person name="Lloyd D.M."/>
            <person name="Lovell J.D."/>
            <person name="Marsh V.L."/>
            <person name="Martin S.L."/>
            <person name="McConnachie L.J."/>
            <person name="McLay K."/>
            <person name="McMurray A.A."/>
            <person name="Milne S.A."/>
            <person name="Mistry D."/>
            <person name="Moore M.J.F."/>
            <person name="Mullikin J.C."/>
            <person name="Nickerson T."/>
            <person name="Oliver K."/>
            <person name="Parker A."/>
            <person name="Patel R."/>
            <person name="Pearce T.A.V."/>
            <person name="Peck A.I."/>
            <person name="Phillimore B.J.C.T."/>
            <person name="Prathalingam S.R."/>
            <person name="Plumb R.W."/>
            <person name="Ramsay H."/>
            <person name="Rice C.M."/>
            <person name="Ross M.T."/>
            <person name="Scott C.E."/>
            <person name="Sehra H.K."/>
            <person name="Shownkeen R."/>
            <person name="Sims S."/>
            <person name="Skuce C.D."/>
            <person name="Smith M.L."/>
            <person name="Soderlund C."/>
            <person name="Steward C.A."/>
            <person name="Sulston J.E."/>
            <person name="Swann R.M."/>
            <person name="Sycamore N."/>
            <person name="Taylor R."/>
            <person name="Tee L."/>
            <person name="Thomas D.W."/>
            <person name="Thorpe A."/>
            <person name="Tracey A."/>
            <person name="Tromans A.C."/>
            <person name="Vaudin M."/>
            <person name="Wall M."/>
            <person name="Wallis J.M."/>
            <person name="Whitehead S.L."/>
            <person name="Whittaker P."/>
            <person name="Willey D.L."/>
            <person name="Williams L."/>
            <person name="Williams S.A."/>
            <person name="Wilming L."/>
            <person name="Wray P.W."/>
            <person name="Hubbard T."/>
            <person name="Durbin R.M."/>
            <person name="Bentley D.R."/>
            <person name="Beck S."/>
            <person name="Rogers J."/>
        </authorList>
    </citation>
    <scope>NUCLEOTIDE SEQUENCE [LARGE SCALE GENOMIC DNA]</scope>
</reference>
<reference key="6">
    <citation type="submission" date="2005-09" db="EMBL/GenBank/DDBJ databases">
        <authorList>
            <person name="Mural R.J."/>
            <person name="Istrail S."/>
            <person name="Sutton G.G."/>
            <person name="Florea L."/>
            <person name="Halpern A.L."/>
            <person name="Mobarry C.M."/>
            <person name="Lippert R."/>
            <person name="Walenz B."/>
            <person name="Shatkay H."/>
            <person name="Dew I."/>
            <person name="Miller J.R."/>
            <person name="Flanigan M.J."/>
            <person name="Edwards N.J."/>
            <person name="Bolanos R."/>
            <person name="Fasulo D."/>
            <person name="Halldorsson B.V."/>
            <person name="Hannenhalli S."/>
            <person name="Turner R."/>
            <person name="Yooseph S."/>
            <person name="Lu F."/>
            <person name="Nusskern D.R."/>
            <person name="Shue B.C."/>
            <person name="Zheng X.H."/>
            <person name="Zhong F."/>
            <person name="Delcher A.L."/>
            <person name="Huson D.H."/>
            <person name="Kravitz S.A."/>
            <person name="Mouchard L."/>
            <person name="Reinert K."/>
            <person name="Remington K.A."/>
            <person name="Clark A.G."/>
            <person name="Waterman M.S."/>
            <person name="Eichler E.E."/>
            <person name="Adams M.D."/>
            <person name="Hunkapiller M.W."/>
            <person name="Myers E.W."/>
            <person name="Venter J.C."/>
        </authorList>
    </citation>
    <scope>NUCLEOTIDE SEQUENCE [LARGE SCALE GENOMIC DNA]</scope>
</reference>
<reference key="7">
    <citation type="journal article" date="2004" name="Genome Res.">
        <title>The status, quality, and expansion of the NIH full-length cDNA project: the Mammalian Gene Collection (MGC).</title>
        <authorList>
            <consortium name="The MGC Project Team"/>
        </authorList>
    </citation>
    <scope>NUCLEOTIDE SEQUENCE [LARGE SCALE MRNA] (ISOFORM 1)</scope>
</reference>
<reference key="8">
    <citation type="journal article" date="2005" name="J. Biol. Chem.">
        <title>Four Na+/H+ exchanger isoforms are distributed to Golgi and post-Golgi Compartments and are involved in organelle pH regulation.</title>
        <authorList>
            <person name="Nakamura N."/>
            <person name="Tanaka S."/>
            <person name="Teko Y."/>
            <person name="Mitsui K."/>
            <person name="Kanazawa H."/>
        </authorList>
    </citation>
    <scope>FUNCTION</scope>
    <scope>TRANSPORTER ACTIVITY</scope>
    <scope>SUBCELLULAR LOCATION</scope>
    <scope>TISSUE SPECIFICITY</scope>
    <scope>BIOPHYSICOCHEMICAL PROPERTIES</scope>
</reference>
<reference key="9">
    <citation type="journal article" date="2008" name="Cell. Physiol. Biochem.">
        <title>Gastrointestinal distribution and kinetic characterization of the sodium-hydrogen exchanger isoform 8 (NHE8).</title>
        <authorList>
            <person name="Xu H."/>
            <person name="Chen H."/>
            <person name="Dong J."/>
            <person name="Lynch R."/>
            <person name="Ghishan F.K."/>
        </authorList>
    </citation>
    <scope>TISSUE SPECIFICITY</scope>
</reference>
<reference key="10">
    <citation type="journal article" date="2010" name="Mol. Biol. Cell">
        <title>The sodium/proton exchanger NHE8 regulates late endosomal morphology and function.</title>
        <authorList>
            <person name="Lawrence S.P."/>
            <person name="Bright N.A."/>
            <person name="Luzio J.P."/>
            <person name="Bowers K."/>
        </authorList>
    </citation>
    <scope>SUBCELLULAR LOCATION</scope>
    <scope>FUNCTION</scope>
    <scope>MUTAGENESIS OF GLU-225</scope>
</reference>
<reference key="11">
    <citation type="journal article" date="2010" name="Sci. Signal.">
        <title>Quantitative phosphoproteomics reveals widespread full phosphorylation site occupancy during mitosis.</title>
        <authorList>
            <person name="Olsen J.V."/>
            <person name="Vermeulen M."/>
            <person name="Santamaria A."/>
            <person name="Kumar C."/>
            <person name="Miller M.L."/>
            <person name="Jensen L.J."/>
            <person name="Gnad F."/>
            <person name="Cox J."/>
            <person name="Jensen T.S."/>
            <person name="Nigg E.A."/>
            <person name="Brunak S."/>
            <person name="Mann M."/>
        </authorList>
    </citation>
    <scope>PHOSPHORYLATION [LARGE SCALE ANALYSIS] AT SER-571 AND SER-573</scope>
    <scope>IDENTIFICATION BY MASS SPECTROMETRY [LARGE SCALE ANALYSIS]</scope>
    <source>
        <tissue>Cervix carcinoma</tissue>
    </source>
</reference>
<reference key="12">
    <citation type="journal article" date="2021" name="Am. J. Physiol.">
        <title>Functional characterization of the sodium/hydrogen exchanger 8 and its role in proliferation of colonic epithelial cells.</title>
        <authorList>
            <person name="Zhou K."/>
            <person name="Amiri M."/>
            <person name="Salari A."/>
            <person name="Yu Y."/>
            <person name="Xu H."/>
            <person name="Seidler U."/>
            <person name="Nikolovska K."/>
        </authorList>
    </citation>
    <scope>FUNCTION</scope>
    <scope>SUBCELLULAR LOCATION</scope>
    <scope>ACTIVITY REGULATION</scope>
    <scope>TRANSPORTER ACTIVITY</scope>
</reference>
<gene>
    <name evidence="10" type="primary">SLC9A8</name>
    <name type="synonym">KIAA0939</name>
    <name type="synonym">NHE8</name>
</gene>
<proteinExistence type="evidence at protein level"/>
<accession>Q9Y2E8</accession>
<accession>B4DTQ8</accession>
<accession>Q2M1U9</accession>
<accession>Q68CZ8</accession>
<accession>Q9BX15</accession>
<accession>Q9Y507</accession>
<protein>
    <recommendedName>
        <fullName>Sodium/hydrogen exchanger 8</fullName>
    </recommendedName>
    <alternativeName>
        <fullName>Na(+)/H(+) exchanger 8</fullName>
        <shortName>NHE-8</shortName>
    </alternativeName>
    <alternativeName>
        <fullName>Solute carrier family 9 member 8</fullName>
    </alternativeName>
</protein>
<name>SL9A8_HUMAN</name>
<feature type="chain" id="PRO_0000052365" description="Sodium/hydrogen exchanger 8">
    <location>
        <begin position="1"/>
        <end position="581"/>
    </location>
</feature>
<feature type="transmembrane region" description="Helical" evidence="3">
    <location>
        <begin position="60"/>
        <end position="80"/>
    </location>
</feature>
<feature type="transmembrane region" description="Helical" evidence="3">
    <location>
        <begin position="84"/>
        <end position="104"/>
    </location>
</feature>
<feature type="transmembrane region" description="Helical" evidence="3">
    <location>
        <begin position="123"/>
        <end position="143"/>
    </location>
</feature>
<feature type="transmembrane region" description="Helical" evidence="3">
    <location>
        <begin position="156"/>
        <end position="176"/>
    </location>
</feature>
<feature type="transmembrane region" description="Helical" evidence="3">
    <location>
        <begin position="191"/>
        <end position="211"/>
    </location>
</feature>
<feature type="transmembrane region" description="Helical" evidence="3">
    <location>
        <begin position="264"/>
        <end position="284"/>
    </location>
</feature>
<feature type="transmembrane region" description="Helical" evidence="3">
    <location>
        <begin position="311"/>
        <end position="331"/>
    </location>
</feature>
<feature type="transmembrane region" description="Helical" evidence="3">
    <location>
        <begin position="354"/>
        <end position="374"/>
    </location>
</feature>
<feature type="transmembrane region" description="Helical" evidence="3">
    <location>
        <begin position="379"/>
        <end position="399"/>
    </location>
</feature>
<feature type="transmembrane region" description="Helical" evidence="3">
    <location>
        <begin position="417"/>
        <end position="437"/>
    </location>
</feature>
<feature type="transmembrane region" description="Helical" evidence="3">
    <location>
        <begin position="451"/>
        <end position="471"/>
    </location>
</feature>
<feature type="modified residue" description="Phosphothreonine" evidence="2">
    <location>
        <position position="510"/>
    </location>
</feature>
<feature type="modified residue" description="Phosphoserine" evidence="11">
    <location>
        <position position="571"/>
    </location>
</feature>
<feature type="modified residue" description="Phosphoserine" evidence="11">
    <location>
        <position position="573"/>
    </location>
</feature>
<feature type="splice variant" id="VSP_037686" description="In isoform 2." evidence="8">
    <original>Q</original>
    <variation>QGFFFVCVCVFVCFILQ</variation>
    <location>
        <position position="178"/>
    </location>
</feature>
<feature type="mutagenesis site" description="Induces endosomal clustering." evidence="6">
    <original>E</original>
    <variation>Q</variation>
    <location>
        <position position="225"/>
    </location>
</feature>
<feature type="sequence conflict" description="In Ref. 3; BAC85475." evidence="9" ref="3">
    <original>N</original>
    <variation>D</variation>
    <location>
        <position position="114"/>
    </location>
</feature>
<evidence type="ECO:0000250" key="1">
    <source>
        <dbReference type="UniProtKB" id="Q4L208"/>
    </source>
</evidence>
<evidence type="ECO:0000250" key="2">
    <source>
        <dbReference type="UniProtKB" id="Q8R4D1"/>
    </source>
</evidence>
<evidence type="ECO:0000255" key="3"/>
<evidence type="ECO:0000269" key="4">
    <source>
    </source>
</evidence>
<evidence type="ECO:0000269" key="5">
    <source>
    </source>
</evidence>
<evidence type="ECO:0000269" key="6">
    <source>
    </source>
</evidence>
<evidence type="ECO:0000269" key="7">
    <source>
    </source>
</evidence>
<evidence type="ECO:0000303" key="8">
    <source>
    </source>
</evidence>
<evidence type="ECO:0000305" key="9"/>
<evidence type="ECO:0000312" key="10">
    <source>
        <dbReference type="HGNC" id="HGNC:20728"/>
    </source>
</evidence>
<evidence type="ECO:0007744" key="11">
    <source>
    </source>
</evidence>
<dbReference type="EMBL" id="AB023156">
    <property type="protein sequence ID" value="BAA76783.2"/>
    <property type="status" value="ALT_INIT"/>
    <property type="molecule type" value="mRNA"/>
</dbReference>
<dbReference type="EMBL" id="AK131001">
    <property type="protein sequence ID" value="BAC85475.1"/>
    <property type="status" value="ALT_TERM"/>
    <property type="molecule type" value="mRNA"/>
</dbReference>
<dbReference type="EMBL" id="AK300318">
    <property type="protein sequence ID" value="BAG62070.1"/>
    <property type="molecule type" value="mRNA"/>
</dbReference>
<dbReference type="EMBL" id="CR749638">
    <property type="protein sequence ID" value="CAH18432.1"/>
    <property type="molecule type" value="mRNA"/>
</dbReference>
<dbReference type="EMBL" id="AL162615">
    <property type="status" value="NOT_ANNOTATED_CDS"/>
    <property type="molecule type" value="Genomic_DNA"/>
</dbReference>
<dbReference type="EMBL" id="AL031685">
    <property type="status" value="NOT_ANNOTATED_CDS"/>
    <property type="molecule type" value="Genomic_DNA"/>
</dbReference>
<dbReference type="EMBL" id="CH471077">
    <property type="protein sequence ID" value="EAW75649.1"/>
    <property type="molecule type" value="Genomic_DNA"/>
</dbReference>
<dbReference type="EMBL" id="BC112213">
    <property type="protein sequence ID" value="AAI12214.1"/>
    <property type="molecule type" value="mRNA"/>
</dbReference>
<dbReference type="CCDS" id="CCDS13421.1">
    <molecule id="Q9Y2E8-1"/>
</dbReference>
<dbReference type="CCDS" id="CCDS58774.1">
    <molecule id="Q9Y2E8-2"/>
</dbReference>
<dbReference type="RefSeq" id="NP_001247420.1">
    <molecule id="Q9Y2E8-2"/>
    <property type="nucleotide sequence ID" value="NM_001260491.2"/>
</dbReference>
<dbReference type="RefSeq" id="NP_056081.1">
    <molecule id="Q9Y2E8-1"/>
    <property type="nucleotide sequence ID" value="NM_015266.3"/>
</dbReference>
<dbReference type="SMR" id="Q9Y2E8"/>
<dbReference type="BioGRID" id="116906">
    <property type="interactions" value="29"/>
</dbReference>
<dbReference type="FunCoup" id="Q9Y2E8">
    <property type="interactions" value="580"/>
</dbReference>
<dbReference type="IntAct" id="Q9Y2E8">
    <property type="interactions" value="19"/>
</dbReference>
<dbReference type="STRING" id="9606.ENSP00000416418"/>
<dbReference type="TCDB" id="2.A.36.1.9">
    <property type="family name" value="the monovalent cation:proton antiporter-1 (cpa1) family"/>
</dbReference>
<dbReference type="GlyGen" id="Q9Y2E8">
    <property type="glycosylation" value="3 sites, 1 O-linked glycan (2 sites)"/>
</dbReference>
<dbReference type="iPTMnet" id="Q9Y2E8"/>
<dbReference type="PhosphoSitePlus" id="Q9Y2E8"/>
<dbReference type="BioMuta" id="SLC9A8"/>
<dbReference type="DMDM" id="254763448"/>
<dbReference type="jPOST" id="Q9Y2E8"/>
<dbReference type="MassIVE" id="Q9Y2E8"/>
<dbReference type="PaxDb" id="9606-ENSP00000416418"/>
<dbReference type="PeptideAtlas" id="Q9Y2E8"/>
<dbReference type="ProteomicsDB" id="85751">
    <molecule id="Q9Y2E8-1"/>
</dbReference>
<dbReference type="ProteomicsDB" id="85752">
    <molecule id="Q9Y2E8-2"/>
</dbReference>
<dbReference type="Antibodypedia" id="28505">
    <property type="antibodies" value="164 antibodies from 24 providers"/>
</dbReference>
<dbReference type="DNASU" id="23315"/>
<dbReference type="Ensembl" id="ENST00000361573.3">
    <molecule id="Q9Y2E8-1"/>
    <property type="protein sequence ID" value="ENSP00000354966.2"/>
    <property type="gene ID" value="ENSG00000197818.12"/>
</dbReference>
<dbReference type="Ensembl" id="ENST00000417961.5">
    <molecule id="Q9Y2E8-2"/>
    <property type="protein sequence ID" value="ENSP00000416418.1"/>
    <property type="gene ID" value="ENSG00000197818.12"/>
</dbReference>
<dbReference type="GeneID" id="23315"/>
<dbReference type="KEGG" id="hsa:23315"/>
<dbReference type="MANE-Select" id="ENST00000361573.3">
    <property type="protein sequence ID" value="ENSP00000354966.2"/>
    <property type="RefSeq nucleotide sequence ID" value="NM_015266.3"/>
    <property type="RefSeq protein sequence ID" value="NP_056081.1"/>
</dbReference>
<dbReference type="UCSC" id="uc002xuv.3">
    <molecule id="Q9Y2E8-1"/>
    <property type="organism name" value="human"/>
</dbReference>
<dbReference type="AGR" id="HGNC:20728"/>
<dbReference type="CTD" id="23315"/>
<dbReference type="DisGeNET" id="23315"/>
<dbReference type="GeneCards" id="SLC9A8"/>
<dbReference type="HGNC" id="HGNC:20728">
    <property type="gene designation" value="SLC9A8"/>
</dbReference>
<dbReference type="HPA" id="ENSG00000197818">
    <property type="expression patterns" value="Low tissue specificity"/>
</dbReference>
<dbReference type="MIM" id="612730">
    <property type="type" value="gene"/>
</dbReference>
<dbReference type="neXtProt" id="NX_Q9Y2E8"/>
<dbReference type="OpenTargets" id="ENSG00000197818"/>
<dbReference type="PharmGKB" id="PA134924114"/>
<dbReference type="VEuPathDB" id="HostDB:ENSG00000197818"/>
<dbReference type="eggNOG" id="KOG1965">
    <property type="taxonomic scope" value="Eukaryota"/>
</dbReference>
<dbReference type="GeneTree" id="ENSGT00940000157210"/>
<dbReference type="HOGENOM" id="CLU_005912_11_0_1"/>
<dbReference type="InParanoid" id="Q9Y2E8"/>
<dbReference type="OMA" id="ETVVMWW"/>
<dbReference type="OrthoDB" id="196264at2759"/>
<dbReference type="PAN-GO" id="Q9Y2E8">
    <property type="GO annotations" value="5 GO annotations based on evolutionary models"/>
</dbReference>
<dbReference type="PhylomeDB" id="Q9Y2E8"/>
<dbReference type="TreeFam" id="TF354313"/>
<dbReference type="PathwayCommons" id="Q9Y2E8"/>
<dbReference type="Reactome" id="R-HSA-425986">
    <property type="pathway name" value="Sodium/Proton exchangers"/>
</dbReference>
<dbReference type="SignaLink" id="Q9Y2E8"/>
<dbReference type="SIGNOR" id="Q9Y2E8"/>
<dbReference type="BioGRID-ORCS" id="23315">
    <property type="hits" value="13 hits in 1159 CRISPR screens"/>
</dbReference>
<dbReference type="ChiTaRS" id="SLC9A8">
    <property type="organism name" value="human"/>
</dbReference>
<dbReference type="GeneWiki" id="SLC9A8"/>
<dbReference type="GenomeRNAi" id="23315"/>
<dbReference type="Pharos" id="Q9Y2E8">
    <property type="development level" value="Tbio"/>
</dbReference>
<dbReference type="PRO" id="PR:Q9Y2E8"/>
<dbReference type="Proteomes" id="UP000005640">
    <property type="component" value="Chromosome 20"/>
</dbReference>
<dbReference type="RNAct" id="Q9Y2E8">
    <property type="molecule type" value="protein"/>
</dbReference>
<dbReference type="Bgee" id="ENSG00000197818">
    <property type="expression patterns" value="Expressed in blood and 144 other cell types or tissues"/>
</dbReference>
<dbReference type="GO" id="GO:0001669">
    <property type="term" value="C:acrosomal vesicle"/>
    <property type="evidence" value="ECO:0000250"/>
    <property type="project" value="UniProtKB"/>
</dbReference>
<dbReference type="GO" id="GO:0016324">
    <property type="term" value="C:apical plasma membrane"/>
    <property type="evidence" value="ECO:0000314"/>
    <property type="project" value="UniProtKB"/>
</dbReference>
<dbReference type="GO" id="GO:0000139">
    <property type="term" value="C:Golgi membrane"/>
    <property type="evidence" value="ECO:0000314"/>
    <property type="project" value="UniProtKB"/>
</dbReference>
<dbReference type="GO" id="GO:0032585">
    <property type="term" value="C:multivesicular body membrane"/>
    <property type="evidence" value="ECO:0000314"/>
    <property type="project" value="UniProtKB"/>
</dbReference>
<dbReference type="GO" id="GO:0032588">
    <property type="term" value="C:trans-Golgi network membrane"/>
    <property type="evidence" value="ECO:0000314"/>
    <property type="project" value="UniProtKB"/>
</dbReference>
<dbReference type="GO" id="GO:0015386">
    <property type="term" value="F:potassium:proton antiporter activity"/>
    <property type="evidence" value="ECO:0000314"/>
    <property type="project" value="UniProtKB"/>
</dbReference>
<dbReference type="GO" id="GO:0015385">
    <property type="term" value="F:sodium:proton antiporter activity"/>
    <property type="evidence" value="ECO:0000314"/>
    <property type="project" value="UniProtKB"/>
</dbReference>
<dbReference type="GO" id="GO:0001675">
    <property type="term" value="P:acrosome assembly"/>
    <property type="evidence" value="ECO:0000250"/>
    <property type="project" value="UniProtKB"/>
</dbReference>
<dbReference type="GO" id="GO:0006811">
    <property type="term" value="P:monoatomic ion transport"/>
    <property type="evidence" value="ECO:0000304"/>
    <property type="project" value="Reactome"/>
</dbReference>
<dbReference type="GO" id="GO:0071805">
    <property type="term" value="P:potassium ion transmembrane transport"/>
    <property type="evidence" value="ECO:0000318"/>
    <property type="project" value="GO_Central"/>
</dbReference>
<dbReference type="GO" id="GO:1902600">
    <property type="term" value="P:proton transmembrane transport"/>
    <property type="evidence" value="ECO:0000314"/>
    <property type="project" value="UniProtKB"/>
</dbReference>
<dbReference type="GO" id="GO:1905526">
    <property type="term" value="P:regulation of Golgi lumen acidification"/>
    <property type="evidence" value="ECO:0000314"/>
    <property type="project" value="UniProtKB"/>
</dbReference>
<dbReference type="GO" id="GO:0051453">
    <property type="term" value="P:regulation of intracellular pH"/>
    <property type="evidence" value="ECO:0000315"/>
    <property type="project" value="UniProtKB"/>
</dbReference>
<dbReference type="GO" id="GO:0035725">
    <property type="term" value="P:sodium ion transmembrane transport"/>
    <property type="evidence" value="ECO:0000314"/>
    <property type="project" value="UniProtKB"/>
</dbReference>
<dbReference type="Gene3D" id="6.10.140.1330">
    <property type="match status" value="1"/>
</dbReference>
<dbReference type="InterPro" id="IPR018422">
    <property type="entry name" value="Cation/H_exchanger_CPA1"/>
</dbReference>
<dbReference type="InterPro" id="IPR006153">
    <property type="entry name" value="Cation/H_exchanger_TM"/>
</dbReference>
<dbReference type="InterPro" id="IPR004709">
    <property type="entry name" value="NaH_exchanger"/>
</dbReference>
<dbReference type="NCBIfam" id="TIGR00840">
    <property type="entry name" value="b_cpa1"/>
    <property type="match status" value="1"/>
</dbReference>
<dbReference type="PANTHER" id="PTHR10110">
    <property type="entry name" value="SODIUM/HYDROGEN EXCHANGER"/>
    <property type="match status" value="1"/>
</dbReference>
<dbReference type="PANTHER" id="PTHR10110:SF191">
    <property type="entry name" value="SODIUM_HYDROGEN EXCHANGER 8"/>
    <property type="match status" value="1"/>
</dbReference>
<dbReference type="Pfam" id="PF00999">
    <property type="entry name" value="Na_H_Exchanger"/>
    <property type="match status" value="1"/>
</dbReference>
<dbReference type="PRINTS" id="PR01084">
    <property type="entry name" value="NAHEXCHNGR"/>
</dbReference>
<comment type="function">
    <text evidence="2 4 6 7">Na(+)/H(+) antiporter. Mediates the electoneutral exchange of intracellular H(+) ions for extracellular Na(+) in 1:1 stoichiometry (PubMed:15522866). Acts as an Na(+)/H(+) exchanger in the trans-Golgi. Contributes to the regulation of pH regulation of Golgi apparatus, and consequently, in protein trafficking and endosomal morphology (PubMed:15522866, PubMed:20719963). In germ cells, plays a crucial role in acrosome biogenesis and sperm development, probably by playing a role in the fusion of the Golgi-derived vesicles that form the acrosomal cap (By similarity). Can also be active at the cell surface of specialized cells. In the small intestine, at the cell membrane, plays a major physiological role in transepithelial absorption of Na(+) and regulates intracellular pH homeostasis of intestinal epithelial cells (PubMed:34288721). Acts as an important regulator of mucosal integrity in the intestine and in the stomach, could mediate the pH fluctuation necessary for mucin exocytosis or assist membrane trafficking of other proteins (By similarity). Plays a role in photoreceptor survival and in the maintenance of intracellular pH homeostasis in retinal pigment epithelium (RPE cells) (By similarity).</text>
</comment>
<comment type="catalytic activity">
    <reaction evidence="4 7">
        <text>Na(+)(in) + H(+)(out) = Na(+)(out) + H(+)(in)</text>
        <dbReference type="Rhea" id="RHEA:29419"/>
        <dbReference type="ChEBI" id="CHEBI:15378"/>
        <dbReference type="ChEBI" id="CHEBI:29101"/>
    </reaction>
</comment>
<comment type="activity regulation">
    <text evidence="7">HOE642 inhibits SLC9A8 activity.</text>
</comment>
<comment type="biophysicochemical properties">
    <kinetics>
        <KM evidence="4">130 mM for Na(+)</KM>
    </kinetics>
</comment>
<comment type="interaction">
    <interactant intactId="EBI-1222746">
        <id>Q9Y2E8</id>
    </interactant>
    <interactant intactId="EBI-16439278">
        <id>Q6FHY5</id>
        <label>MEOX2</label>
    </interactant>
    <organismsDiffer>false</organismsDiffer>
    <experiments>3</experiments>
</comment>
<comment type="subcellular location">
    <subcellularLocation>
        <location evidence="4">Golgi apparatus membrane</location>
        <topology evidence="3">Multi-pass membrane protein</topology>
    </subcellularLocation>
    <subcellularLocation>
        <location evidence="4 6">Golgi apparatus</location>
        <location evidence="4 6">trans-Golgi network membrane</location>
        <topology evidence="3">Multi-pass membrane protein</topology>
    </subcellularLocation>
    <subcellularLocation>
        <location evidence="6">Endosome</location>
        <location evidence="6">Multivesicular body membrane</location>
        <topology evidence="3">Multi-pass membrane protein</topology>
    </subcellularLocation>
    <subcellularLocation>
        <location evidence="7">Apical cell membrane</location>
        <topology evidence="3">Multi-pass membrane protein</topology>
    </subcellularLocation>
    <subcellularLocation>
        <location evidence="2">Cytoplasmic vesicle</location>
        <location evidence="2">Secretory vesicle</location>
        <location evidence="2">Acrosome</location>
    </subcellularLocation>
    <text evidence="1 4 6">Intracellular versus plasma membrane-resident location may vary with cell type. Mainly localized to the mid- to trans-Golgi compartments but a proportion is also localized to multivesicular bodies (PubMed:15522866, PubMed:20719963). Localized at the apical membrane of polarized gastrointestinal epithelial cells (By similarity). Recruitment to the plasma membrane upon acid stimulation (By similarity).</text>
</comment>
<comment type="alternative products">
    <event type="alternative splicing"/>
    <isoform>
        <id>Q9Y2E8-1</id>
        <name>1</name>
        <sequence type="displayed"/>
    </isoform>
    <isoform>
        <id>Q9Y2E8-2</id>
        <name>2</name>
        <sequence type="described" ref="VSP_037686"/>
    </isoform>
</comment>
<comment type="tissue specificity">
    <text evidence="4 5">Ubiquitous. Strongly expressed in skeletal muscle and kidney (PubMed:15522866). Detected throughout the entire gastrointestinal tract, with high expression detected in stomach, duodenum and ascending colon (PubMed:18209477).</text>
</comment>
<comment type="similarity">
    <text evidence="9">Belongs to the monovalent cation:proton antiporter 1 (CPA1) transporter (TC 2.A.36) family.</text>
</comment>
<comment type="sequence caution" evidence="9">
    <conflict type="erroneous initiation">
        <sequence resource="EMBL-CDS" id="BAA76783"/>
    </conflict>
</comment>
<organism>
    <name type="scientific">Homo sapiens</name>
    <name type="common">Human</name>
    <dbReference type="NCBI Taxonomy" id="9606"/>
    <lineage>
        <taxon>Eukaryota</taxon>
        <taxon>Metazoa</taxon>
        <taxon>Chordata</taxon>
        <taxon>Craniata</taxon>
        <taxon>Vertebrata</taxon>
        <taxon>Euteleostomi</taxon>
        <taxon>Mammalia</taxon>
        <taxon>Eutheria</taxon>
        <taxon>Euarchontoglires</taxon>
        <taxon>Primates</taxon>
        <taxon>Haplorrhini</taxon>
        <taxon>Catarrhini</taxon>
        <taxon>Hominidae</taxon>
        <taxon>Homo</taxon>
    </lineage>
</organism>
<sequence>MGEKMAEEERFPNTTHEGFNVTLHTTLVVTTKLVLPTPGKPILPVQTGEQAQQEEQSSGMTIFFSLLVLAICIILVHLLIRYRLHFLPESVAVVSLGILMGAVIKIIEFKKLANWKEEEMFRPNMFFLLLLPPIIFESGYSLHKGNFFQNIGSITLFAVFGTAISAFVVGGGIYFLGQADVISKLNMTDSFAFGSLISAVDPVATIAIFNALHVDPVLNMLVFGESILNDAVSIVLTNTAEGLTRKNMSDVSGWQTFLQALDYFLKMFFGSAALGTLTGLISALVLKHIDLRKTPSLEFGMMIIFAYLPYGLAEGISLSGIMAILFSGIVMSHYTHHNLSPVTQILMQQTLRTVAFLCETCVFAFLGLSIFSFPHKFEISFVIWCIVLVLFGRAVNIFPLSYLLNFFRDHKITPKMMFIMWFSGLRGAIPYALSLHLDLEPMEKRQLIGTTTIVIVLFTILLLGGSTMPLIRLMDIEDAKAHRRNKKDVNLSKTEKMGNTVESEHLSELTEEEYEAHYIRRQDLKGFVWLDAKYLNPFFTRRLTQEDLHHGRIQMKTLTNKWYEEVRQGPSGSEDDEQELL</sequence>